<organism>
    <name type="scientific">Escherichia coli (strain SE11)</name>
    <dbReference type="NCBI Taxonomy" id="409438"/>
    <lineage>
        <taxon>Bacteria</taxon>
        <taxon>Pseudomonadati</taxon>
        <taxon>Pseudomonadota</taxon>
        <taxon>Gammaproteobacteria</taxon>
        <taxon>Enterobacterales</taxon>
        <taxon>Enterobacteriaceae</taxon>
        <taxon>Escherichia</taxon>
    </lineage>
</organism>
<proteinExistence type="inferred from homology"/>
<dbReference type="EC" id="7.-.-.-" evidence="1"/>
<dbReference type="EMBL" id="AP009240">
    <property type="protein sequence ID" value="BAG77276.1"/>
    <property type="molecule type" value="Genomic_DNA"/>
</dbReference>
<dbReference type="RefSeq" id="WP_000231922.1">
    <property type="nucleotide sequence ID" value="NC_011415.1"/>
</dbReference>
<dbReference type="SMR" id="B6IB68"/>
<dbReference type="KEGG" id="ecy:ECSE_1752"/>
<dbReference type="HOGENOM" id="CLU_042020_0_0_6"/>
<dbReference type="Proteomes" id="UP000008199">
    <property type="component" value="Chromosome"/>
</dbReference>
<dbReference type="GO" id="GO:0005886">
    <property type="term" value="C:plasma membrane"/>
    <property type="evidence" value="ECO:0007669"/>
    <property type="project" value="UniProtKB-SubCell"/>
</dbReference>
<dbReference type="GO" id="GO:0022900">
    <property type="term" value="P:electron transport chain"/>
    <property type="evidence" value="ECO:0007669"/>
    <property type="project" value="UniProtKB-UniRule"/>
</dbReference>
<dbReference type="GO" id="GO:0055085">
    <property type="term" value="P:transmembrane transport"/>
    <property type="evidence" value="ECO:0007669"/>
    <property type="project" value="InterPro"/>
</dbReference>
<dbReference type="HAMAP" id="MF_00462">
    <property type="entry name" value="RsxD_RnfD"/>
    <property type="match status" value="1"/>
</dbReference>
<dbReference type="InterPro" id="IPR004338">
    <property type="entry name" value="NqrB/RnfD"/>
</dbReference>
<dbReference type="InterPro" id="IPR011303">
    <property type="entry name" value="RnfD_bac"/>
</dbReference>
<dbReference type="NCBIfam" id="NF002011">
    <property type="entry name" value="PRK00816.1"/>
    <property type="match status" value="1"/>
</dbReference>
<dbReference type="NCBIfam" id="TIGR01946">
    <property type="entry name" value="rnfD"/>
    <property type="match status" value="1"/>
</dbReference>
<dbReference type="PANTHER" id="PTHR30578">
    <property type="entry name" value="ELECTRON TRANSPORT COMPLEX PROTEIN RNFD"/>
    <property type="match status" value="1"/>
</dbReference>
<dbReference type="PANTHER" id="PTHR30578:SF0">
    <property type="entry name" value="ION-TRANSLOCATING OXIDOREDUCTASE COMPLEX SUBUNIT D"/>
    <property type="match status" value="1"/>
</dbReference>
<dbReference type="Pfam" id="PF03116">
    <property type="entry name" value="NQR2_RnfD_RnfE"/>
    <property type="match status" value="1"/>
</dbReference>
<comment type="function">
    <text evidence="1">Part of a membrane-bound complex that couples electron transfer with translocation of ions across the membrane. Required to maintain the reduced state of SoxR.</text>
</comment>
<comment type="cofactor">
    <cofactor evidence="1">
        <name>FMN</name>
        <dbReference type="ChEBI" id="CHEBI:58210"/>
    </cofactor>
</comment>
<comment type="subunit">
    <text evidence="1">The complex is composed of six subunits: RsxA, RsxB, RsxC, RsxD, RsxE and RsxG.</text>
</comment>
<comment type="subcellular location">
    <subcellularLocation>
        <location evidence="1">Cell inner membrane</location>
        <topology evidence="1">Multi-pass membrane protein</topology>
    </subcellularLocation>
</comment>
<comment type="similarity">
    <text evidence="1">Belongs to the NqrB/RnfD family.</text>
</comment>
<accession>B6IB68</accession>
<reference key="1">
    <citation type="journal article" date="2008" name="DNA Res.">
        <title>Complete genome sequence and comparative analysis of the wild-type commensal Escherichia coli strain SE11 isolated from a healthy adult.</title>
        <authorList>
            <person name="Oshima K."/>
            <person name="Toh H."/>
            <person name="Ogura Y."/>
            <person name="Sasamoto H."/>
            <person name="Morita H."/>
            <person name="Park S.-H."/>
            <person name="Ooka T."/>
            <person name="Iyoda S."/>
            <person name="Taylor T.D."/>
            <person name="Hayashi T."/>
            <person name="Itoh K."/>
            <person name="Hattori M."/>
        </authorList>
    </citation>
    <scope>NUCLEOTIDE SEQUENCE [LARGE SCALE GENOMIC DNA]</scope>
    <source>
        <strain>SE11</strain>
    </source>
</reference>
<keyword id="KW-0997">Cell inner membrane</keyword>
<keyword id="KW-1003">Cell membrane</keyword>
<keyword id="KW-0249">Electron transport</keyword>
<keyword id="KW-0285">Flavoprotein</keyword>
<keyword id="KW-0288">FMN</keyword>
<keyword id="KW-0472">Membrane</keyword>
<keyword id="KW-0597">Phosphoprotein</keyword>
<keyword id="KW-1278">Translocase</keyword>
<keyword id="KW-0812">Transmembrane</keyword>
<keyword id="KW-1133">Transmembrane helix</keyword>
<keyword id="KW-0813">Transport</keyword>
<gene>
    <name evidence="1" type="primary">rsxD</name>
    <name type="ordered locus">ECSE_1752</name>
</gene>
<sequence>MVFRIASSPYTHNQRQTSRIMLLVLLAAVPGIAAQLWFFGWGTLVQILLASVSALLAEALVLKLRKQSVAATLKDNSALLTGLLLAVSIPPLAPWWMVVLGTVFAVIIAKQLYGGLGQNPFNPAMIGYVVLLISFPVQMTSWLPPHEIAVNIPGFIDAIQVIFSGHTASGGDMNTLRLGIDGISQATPLDTFKTSVRAGHSVEQIMQYPIYSGILAGAGWQWVNLAWLAGGLWLLWQKAIRWHIPLSFLVTLALCATLGWLFSPETLAAPQIHLLSGATMLGAFFILTDPVTASTTNRGRLIFGALAGLLVWLIRSFGGYPDGVAFAVLLANITVPLIDYYTRPRVYGHRKG</sequence>
<evidence type="ECO:0000255" key="1">
    <source>
        <dbReference type="HAMAP-Rule" id="MF_00462"/>
    </source>
</evidence>
<feature type="chain" id="PRO_1000191672" description="Ion-translocating oxidoreductase complex subunit D">
    <location>
        <begin position="1"/>
        <end position="352"/>
    </location>
</feature>
<feature type="transmembrane region" description="Helical" evidence="1">
    <location>
        <begin position="20"/>
        <end position="40"/>
    </location>
</feature>
<feature type="transmembrane region" description="Helical" evidence="1">
    <location>
        <begin position="42"/>
        <end position="62"/>
    </location>
</feature>
<feature type="transmembrane region" description="Helical" evidence="1">
    <location>
        <begin position="78"/>
        <end position="109"/>
    </location>
</feature>
<feature type="transmembrane region" description="Helical" evidence="1">
    <location>
        <begin position="123"/>
        <end position="143"/>
    </location>
</feature>
<feature type="transmembrane region" description="Helical" evidence="1">
    <location>
        <begin position="148"/>
        <end position="168"/>
    </location>
</feature>
<feature type="transmembrane region" description="Helical" evidence="1">
    <location>
        <begin position="214"/>
        <end position="234"/>
    </location>
</feature>
<feature type="transmembrane region" description="Helical" evidence="1">
    <location>
        <begin position="242"/>
        <end position="262"/>
    </location>
</feature>
<feature type="transmembrane region" description="Helical" evidence="1">
    <location>
        <begin position="267"/>
        <end position="287"/>
    </location>
</feature>
<feature type="transmembrane region" description="Helical" evidence="1">
    <location>
        <begin position="301"/>
        <end position="321"/>
    </location>
</feature>
<feature type="transmembrane region" description="Helical" evidence="1">
    <location>
        <begin position="322"/>
        <end position="342"/>
    </location>
</feature>
<feature type="modified residue" description="FMN phosphoryl threonine" evidence="1">
    <location>
        <position position="187"/>
    </location>
</feature>
<protein>
    <recommendedName>
        <fullName evidence="1">Ion-translocating oxidoreductase complex subunit D</fullName>
        <ecNumber evidence="1">7.-.-.-</ecNumber>
    </recommendedName>
    <alternativeName>
        <fullName evidence="1">Rsx electron transport complex subunit D</fullName>
    </alternativeName>
</protein>
<name>RSXD_ECOSE</name>